<accession>Q39DU8</accession>
<comment type="function">
    <text evidence="1">Catalyzes the pyruvoyl-dependent decarboxylation of aspartate to produce beta-alanine.</text>
</comment>
<comment type="catalytic activity">
    <reaction evidence="1">
        <text>L-aspartate + H(+) = beta-alanine + CO2</text>
        <dbReference type="Rhea" id="RHEA:19497"/>
        <dbReference type="ChEBI" id="CHEBI:15378"/>
        <dbReference type="ChEBI" id="CHEBI:16526"/>
        <dbReference type="ChEBI" id="CHEBI:29991"/>
        <dbReference type="ChEBI" id="CHEBI:57966"/>
        <dbReference type="EC" id="4.1.1.11"/>
    </reaction>
</comment>
<comment type="cofactor">
    <cofactor evidence="1">
        <name>pyruvate</name>
        <dbReference type="ChEBI" id="CHEBI:15361"/>
    </cofactor>
    <text evidence="1">Binds 1 pyruvoyl group covalently per subunit.</text>
</comment>
<comment type="pathway">
    <text evidence="1">Cofactor biosynthesis; (R)-pantothenate biosynthesis; beta-alanine from L-aspartate: step 1/1.</text>
</comment>
<comment type="subunit">
    <text evidence="1">Heterooctamer of four alpha and four beta subunits.</text>
</comment>
<comment type="subcellular location">
    <subcellularLocation>
        <location evidence="1">Cytoplasm</location>
    </subcellularLocation>
</comment>
<comment type="PTM">
    <text evidence="1">Is synthesized initially as an inactive proenzyme, which is activated by self-cleavage at a specific serine bond to produce a beta-subunit with a hydroxyl group at its C-terminus and an alpha-subunit with a pyruvoyl group at its N-terminus.</text>
</comment>
<comment type="similarity">
    <text evidence="1">Belongs to the PanD family.</text>
</comment>
<dbReference type="EC" id="4.1.1.11" evidence="1"/>
<dbReference type="EMBL" id="CP000151">
    <property type="protein sequence ID" value="ABB09368.1"/>
    <property type="molecule type" value="Genomic_DNA"/>
</dbReference>
<dbReference type="RefSeq" id="WP_011352892.1">
    <property type="nucleotide sequence ID" value="NZ_CABVQB010000011.1"/>
</dbReference>
<dbReference type="SMR" id="Q39DU8"/>
<dbReference type="GeneID" id="45095658"/>
<dbReference type="KEGG" id="bur:Bcep18194_A5774"/>
<dbReference type="PATRIC" id="fig|482957.22.peg.2757"/>
<dbReference type="HOGENOM" id="CLU_115305_2_1_4"/>
<dbReference type="UniPathway" id="UPA00028">
    <property type="reaction ID" value="UER00002"/>
</dbReference>
<dbReference type="Proteomes" id="UP000002705">
    <property type="component" value="Chromosome 1"/>
</dbReference>
<dbReference type="GO" id="GO:0005829">
    <property type="term" value="C:cytosol"/>
    <property type="evidence" value="ECO:0007669"/>
    <property type="project" value="TreeGrafter"/>
</dbReference>
<dbReference type="GO" id="GO:0004068">
    <property type="term" value="F:aspartate 1-decarboxylase activity"/>
    <property type="evidence" value="ECO:0007669"/>
    <property type="project" value="UniProtKB-UniRule"/>
</dbReference>
<dbReference type="GO" id="GO:0006523">
    <property type="term" value="P:alanine biosynthetic process"/>
    <property type="evidence" value="ECO:0007669"/>
    <property type="project" value="InterPro"/>
</dbReference>
<dbReference type="GO" id="GO:0015940">
    <property type="term" value="P:pantothenate biosynthetic process"/>
    <property type="evidence" value="ECO:0007669"/>
    <property type="project" value="UniProtKB-UniRule"/>
</dbReference>
<dbReference type="CDD" id="cd06919">
    <property type="entry name" value="Asp_decarbox"/>
    <property type="match status" value="1"/>
</dbReference>
<dbReference type="Gene3D" id="2.40.40.20">
    <property type="match status" value="1"/>
</dbReference>
<dbReference type="HAMAP" id="MF_00446">
    <property type="entry name" value="PanD"/>
    <property type="match status" value="1"/>
</dbReference>
<dbReference type="InterPro" id="IPR009010">
    <property type="entry name" value="Asp_de-COase-like_dom_sf"/>
</dbReference>
<dbReference type="InterPro" id="IPR003190">
    <property type="entry name" value="Asp_decarbox"/>
</dbReference>
<dbReference type="NCBIfam" id="TIGR00223">
    <property type="entry name" value="panD"/>
    <property type="match status" value="1"/>
</dbReference>
<dbReference type="PANTHER" id="PTHR21012">
    <property type="entry name" value="ASPARTATE 1-DECARBOXYLASE"/>
    <property type="match status" value="1"/>
</dbReference>
<dbReference type="PANTHER" id="PTHR21012:SF0">
    <property type="entry name" value="ASPARTATE 1-DECARBOXYLASE"/>
    <property type="match status" value="1"/>
</dbReference>
<dbReference type="Pfam" id="PF02261">
    <property type="entry name" value="Asp_decarbox"/>
    <property type="match status" value="1"/>
</dbReference>
<dbReference type="PIRSF" id="PIRSF006246">
    <property type="entry name" value="Asp_decarbox"/>
    <property type="match status" value="1"/>
</dbReference>
<dbReference type="SUPFAM" id="SSF50692">
    <property type="entry name" value="ADC-like"/>
    <property type="match status" value="1"/>
</dbReference>
<sequence length="128" mass="14331">MQRHMLKSKIHRAAVTHCELHYEGSCAIDEDLLEASGIIENERIDIWNINNGERFSTYAIKGERGSGMISLNGSAARRAQLGDLVIIAAFAMVDEAELQAGWKPKLVFMDDGNKIKGHRDHVPTQNWT</sequence>
<protein>
    <recommendedName>
        <fullName evidence="1">Aspartate 1-decarboxylase</fullName>
        <ecNumber evidence="1">4.1.1.11</ecNumber>
    </recommendedName>
    <alternativeName>
        <fullName evidence="1">Aspartate alpha-decarboxylase</fullName>
    </alternativeName>
    <component>
        <recommendedName>
            <fullName evidence="1">Aspartate 1-decarboxylase beta chain</fullName>
        </recommendedName>
    </component>
    <component>
        <recommendedName>
            <fullName evidence="1">Aspartate 1-decarboxylase alpha chain</fullName>
        </recommendedName>
    </component>
</protein>
<keyword id="KW-0068">Autocatalytic cleavage</keyword>
<keyword id="KW-0963">Cytoplasm</keyword>
<keyword id="KW-0210">Decarboxylase</keyword>
<keyword id="KW-0456">Lyase</keyword>
<keyword id="KW-0566">Pantothenate biosynthesis</keyword>
<keyword id="KW-0670">Pyruvate</keyword>
<keyword id="KW-0704">Schiff base</keyword>
<keyword id="KW-0865">Zymogen</keyword>
<feature type="chain" id="PRO_0000236855" description="Aspartate 1-decarboxylase beta chain" evidence="1">
    <location>
        <begin position="1"/>
        <end position="24"/>
    </location>
</feature>
<feature type="chain" id="PRO_0000236856" description="Aspartate 1-decarboxylase alpha chain" evidence="1">
    <location>
        <begin position="25"/>
        <end position="128"/>
    </location>
</feature>
<feature type="active site" description="Schiff-base intermediate with substrate; via pyruvic acid" evidence="1">
    <location>
        <position position="25"/>
    </location>
</feature>
<feature type="active site" description="Proton donor" evidence="1">
    <location>
        <position position="58"/>
    </location>
</feature>
<feature type="binding site" evidence="1">
    <location>
        <position position="57"/>
    </location>
    <ligand>
        <name>substrate</name>
    </ligand>
</feature>
<feature type="binding site" evidence="1">
    <location>
        <begin position="73"/>
        <end position="75"/>
    </location>
    <ligand>
        <name>substrate</name>
    </ligand>
</feature>
<feature type="modified residue" description="Pyruvic acid (Ser)" evidence="1">
    <location>
        <position position="25"/>
    </location>
</feature>
<reference key="1">
    <citation type="submission" date="2005-10" db="EMBL/GenBank/DDBJ databases">
        <title>Complete sequence of chromosome 1 of Burkholderia sp. 383.</title>
        <authorList>
            <consortium name="US DOE Joint Genome Institute"/>
            <person name="Copeland A."/>
            <person name="Lucas S."/>
            <person name="Lapidus A."/>
            <person name="Barry K."/>
            <person name="Detter J.C."/>
            <person name="Glavina T."/>
            <person name="Hammon N."/>
            <person name="Israni S."/>
            <person name="Pitluck S."/>
            <person name="Chain P."/>
            <person name="Malfatti S."/>
            <person name="Shin M."/>
            <person name="Vergez L."/>
            <person name="Schmutz J."/>
            <person name="Larimer F."/>
            <person name="Land M."/>
            <person name="Kyrpides N."/>
            <person name="Lykidis A."/>
            <person name="Richardson P."/>
        </authorList>
    </citation>
    <scope>NUCLEOTIDE SEQUENCE [LARGE SCALE GENOMIC DNA]</scope>
    <source>
        <strain>ATCC 17760 / DSM 23089 / LMG 22485 / NCIMB 9086 / R18194 / 383</strain>
    </source>
</reference>
<gene>
    <name evidence="1" type="primary">panD</name>
    <name type="ordered locus">Bcep18194_A5774</name>
</gene>
<evidence type="ECO:0000255" key="1">
    <source>
        <dbReference type="HAMAP-Rule" id="MF_00446"/>
    </source>
</evidence>
<organism>
    <name type="scientific">Burkholderia lata (strain ATCC 17760 / DSM 23089 / LMG 22485 / NCIMB 9086 / R18194 / 383)</name>
    <dbReference type="NCBI Taxonomy" id="482957"/>
    <lineage>
        <taxon>Bacteria</taxon>
        <taxon>Pseudomonadati</taxon>
        <taxon>Pseudomonadota</taxon>
        <taxon>Betaproteobacteria</taxon>
        <taxon>Burkholderiales</taxon>
        <taxon>Burkholderiaceae</taxon>
        <taxon>Burkholderia</taxon>
        <taxon>Burkholderia cepacia complex</taxon>
    </lineage>
</organism>
<proteinExistence type="inferred from homology"/>
<name>PAND_BURL3</name>